<sequence length="332" mass="36925">MNKISRIIITPGEPAGIGFDLVVLISQKIWRSELVICCDPDILVKRAKDHGIKLKLHFYNKNLSPKVREKGELTIIPIKVNSNVTRGILNINNSYYVINTLTRACLGCINKEFSALVTGPVHKGIIKDSGIKFIGHTEFLAGFSLCKNPVMMLMYNSLRIALATNHIPIKDISKCINFNLIRKKLIVIFNSLRNIFKINNPCIYVCGLNPHAGESGHIGTEEINIIQPAISSLKYLPCKIIGPISADSIFQQKYLKDADAILAMYHDQGLPMIKYIGFRKSVNITLGLPFIRTSVDHGTALNIKNLNEISSKSMEKAISLAIDISQDNSIKK</sequence>
<feature type="chain" id="PRO_1000051525" description="4-hydroxythreonine-4-phosphate dehydrogenase">
    <location>
        <begin position="1"/>
        <end position="332"/>
    </location>
</feature>
<feature type="binding site" evidence="1">
    <location>
        <position position="136"/>
    </location>
    <ligand>
        <name>substrate</name>
    </ligand>
</feature>
<feature type="binding site" evidence="1">
    <location>
        <position position="137"/>
    </location>
    <ligand>
        <name>substrate</name>
    </ligand>
</feature>
<feature type="binding site" evidence="1">
    <location>
        <position position="166"/>
    </location>
    <ligand>
        <name>a divalent metal cation</name>
        <dbReference type="ChEBI" id="CHEBI:60240"/>
        <note>ligand shared between dimeric partners</note>
    </ligand>
</feature>
<feature type="binding site" evidence="1">
    <location>
        <position position="211"/>
    </location>
    <ligand>
        <name>a divalent metal cation</name>
        <dbReference type="ChEBI" id="CHEBI:60240"/>
        <note>ligand shared between dimeric partners</note>
    </ligand>
</feature>
<feature type="binding site" evidence="1">
    <location>
        <position position="266"/>
    </location>
    <ligand>
        <name>a divalent metal cation</name>
        <dbReference type="ChEBI" id="CHEBI:60240"/>
        <note>ligand shared between dimeric partners</note>
    </ligand>
</feature>
<feature type="binding site" evidence="1">
    <location>
        <position position="274"/>
    </location>
    <ligand>
        <name>substrate</name>
    </ligand>
</feature>
<feature type="binding site" evidence="1">
    <location>
        <position position="283"/>
    </location>
    <ligand>
        <name>substrate</name>
    </ligand>
</feature>
<feature type="binding site" evidence="1">
    <location>
        <position position="292"/>
    </location>
    <ligand>
        <name>substrate</name>
    </ligand>
</feature>
<comment type="function">
    <text evidence="1">Catalyzes the NAD(P)-dependent oxidation of 4-(phosphooxy)-L-threonine (HTP) into 2-amino-3-oxo-4-(phosphooxy)butyric acid which spontaneously decarboxylates to form 3-amino-2-oxopropyl phosphate (AHAP).</text>
</comment>
<comment type="catalytic activity">
    <reaction evidence="1">
        <text>4-(phosphooxy)-L-threonine + NAD(+) = 3-amino-2-oxopropyl phosphate + CO2 + NADH</text>
        <dbReference type="Rhea" id="RHEA:32275"/>
        <dbReference type="ChEBI" id="CHEBI:16526"/>
        <dbReference type="ChEBI" id="CHEBI:57279"/>
        <dbReference type="ChEBI" id="CHEBI:57540"/>
        <dbReference type="ChEBI" id="CHEBI:57945"/>
        <dbReference type="ChEBI" id="CHEBI:58452"/>
        <dbReference type="EC" id="1.1.1.262"/>
    </reaction>
</comment>
<comment type="cofactor">
    <cofactor evidence="1">
        <name>Zn(2+)</name>
        <dbReference type="ChEBI" id="CHEBI:29105"/>
    </cofactor>
    <cofactor evidence="1">
        <name>Mg(2+)</name>
        <dbReference type="ChEBI" id="CHEBI:18420"/>
    </cofactor>
    <cofactor evidence="1">
        <name>Co(2+)</name>
        <dbReference type="ChEBI" id="CHEBI:48828"/>
    </cofactor>
    <text evidence="1">Binds 1 divalent metal cation per subunit. Can use ions such as Zn(2+), Mg(2+) or Co(2+).</text>
</comment>
<comment type="pathway">
    <text evidence="1">Cofactor biosynthesis; pyridoxine 5'-phosphate biosynthesis; pyridoxine 5'-phosphate from D-erythrose 4-phosphate: step 4/5.</text>
</comment>
<comment type="subunit">
    <text evidence="1">Homodimer.</text>
</comment>
<comment type="subcellular location">
    <subcellularLocation>
        <location evidence="1">Cytoplasm</location>
    </subcellularLocation>
</comment>
<comment type="miscellaneous">
    <text evidence="1">The active site is located at the dimer interface.</text>
</comment>
<comment type="similarity">
    <text evidence="1">Belongs to the PdxA family.</text>
</comment>
<organism>
    <name type="scientific">Wigglesworthia glossinidia brevipalpis</name>
    <dbReference type="NCBI Taxonomy" id="36870"/>
    <lineage>
        <taxon>Bacteria</taxon>
        <taxon>Pseudomonadati</taxon>
        <taxon>Pseudomonadota</taxon>
        <taxon>Gammaproteobacteria</taxon>
        <taxon>Enterobacterales</taxon>
        <taxon>Erwiniaceae</taxon>
        <taxon>Wigglesworthia</taxon>
    </lineage>
</organism>
<accession>Q8D3I2</accession>
<gene>
    <name evidence="1" type="primary">pdxA</name>
    <name type="ordered locus">WIGBR0190</name>
</gene>
<protein>
    <recommendedName>
        <fullName evidence="1">4-hydroxythreonine-4-phosphate dehydrogenase</fullName>
        <ecNumber evidence="1">1.1.1.262</ecNumber>
    </recommendedName>
    <alternativeName>
        <fullName evidence="1">4-(phosphohydroxy)-L-threonine dehydrogenase</fullName>
    </alternativeName>
</protein>
<keyword id="KW-0170">Cobalt</keyword>
<keyword id="KW-0963">Cytoplasm</keyword>
<keyword id="KW-0460">Magnesium</keyword>
<keyword id="KW-0479">Metal-binding</keyword>
<keyword id="KW-0520">NAD</keyword>
<keyword id="KW-0521">NADP</keyword>
<keyword id="KW-0560">Oxidoreductase</keyword>
<keyword id="KW-0664">Pyridoxine biosynthesis</keyword>
<keyword id="KW-1185">Reference proteome</keyword>
<keyword id="KW-0862">Zinc</keyword>
<reference key="1">
    <citation type="journal article" date="2002" name="Nat. Genet.">
        <title>Genome sequence of the endocellular obligate symbiont of tsetse flies, Wigglesworthia glossinidia.</title>
        <authorList>
            <person name="Akman L."/>
            <person name="Yamashita A."/>
            <person name="Watanabe H."/>
            <person name="Oshima K."/>
            <person name="Shiba T."/>
            <person name="Hattori M."/>
            <person name="Aksoy S."/>
        </authorList>
    </citation>
    <scope>NUCLEOTIDE SEQUENCE [LARGE SCALE GENOMIC DNA]</scope>
</reference>
<proteinExistence type="inferred from homology"/>
<dbReference type="EC" id="1.1.1.262" evidence="1"/>
<dbReference type="EMBL" id="BA000021">
    <property type="protein sequence ID" value="BAC24165.1"/>
    <property type="molecule type" value="Genomic_DNA"/>
</dbReference>
<dbReference type="SMR" id="Q8D3I2"/>
<dbReference type="STRING" id="36870.gene:10368497"/>
<dbReference type="KEGG" id="wbr:pdxA"/>
<dbReference type="eggNOG" id="COG1995">
    <property type="taxonomic scope" value="Bacteria"/>
</dbReference>
<dbReference type="HOGENOM" id="CLU_040168_2_0_6"/>
<dbReference type="OrthoDB" id="9801783at2"/>
<dbReference type="UniPathway" id="UPA00244">
    <property type="reaction ID" value="UER00312"/>
</dbReference>
<dbReference type="Proteomes" id="UP000000562">
    <property type="component" value="Chromosome"/>
</dbReference>
<dbReference type="GO" id="GO:0005737">
    <property type="term" value="C:cytoplasm"/>
    <property type="evidence" value="ECO:0007669"/>
    <property type="project" value="UniProtKB-SubCell"/>
</dbReference>
<dbReference type="GO" id="GO:0050570">
    <property type="term" value="F:4-hydroxythreonine-4-phosphate dehydrogenase activity"/>
    <property type="evidence" value="ECO:0007669"/>
    <property type="project" value="UniProtKB-UniRule"/>
</dbReference>
<dbReference type="GO" id="GO:0050897">
    <property type="term" value="F:cobalt ion binding"/>
    <property type="evidence" value="ECO:0007669"/>
    <property type="project" value="UniProtKB-UniRule"/>
</dbReference>
<dbReference type="GO" id="GO:0000287">
    <property type="term" value="F:magnesium ion binding"/>
    <property type="evidence" value="ECO:0007669"/>
    <property type="project" value="UniProtKB-UniRule"/>
</dbReference>
<dbReference type="GO" id="GO:0051287">
    <property type="term" value="F:NAD binding"/>
    <property type="evidence" value="ECO:0007669"/>
    <property type="project" value="InterPro"/>
</dbReference>
<dbReference type="GO" id="GO:0008270">
    <property type="term" value="F:zinc ion binding"/>
    <property type="evidence" value="ECO:0007669"/>
    <property type="project" value="UniProtKB-UniRule"/>
</dbReference>
<dbReference type="GO" id="GO:0042823">
    <property type="term" value="P:pyridoxal phosphate biosynthetic process"/>
    <property type="evidence" value="ECO:0007669"/>
    <property type="project" value="UniProtKB-UniRule"/>
</dbReference>
<dbReference type="GO" id="GO:0008615">
    <property type="term" value="P:pyridoxine biosynthetic process"/>
    <property type="evidence" value="ECO:0007669"/>
    <property type="project" value="UniProtKB-UniRule"/>
</dbReference>
<dbReference type="Gene3D" id="3.40.718.10">
    <property type="entry name" value="Isopropylmalate Dehydrogenase"/>
    <property type="match status" value="1"/>
</dbReference>
<dbReference type="HAMAP" id="MF_00536">
    <property type="entry name" value="PdxA"/>
    <property type="match status" value="1"/>
</dbReference>
<dbReference type="InterPro" id="IPR037510">
    <property type="entry name" value="PdxA"/>
</dbReference>
<dbReference type="InterPro" id="IPR005255">
    <property type="entry name" value="PdxA_fam"/>
</dbReference>
<dbReference type="NCBIfam" id="TIGR00557">
    <property type="entry name" value="pdxA"/>
    <property type="match status" value="1"/>
</dbReference>
<dbReference type="PANTHER" id="PTHR30004">
    <property type="entry name" value="4-HYDROXYTHREONINE-4-PHOSPHATE DEHYDROGENASE"/>
    <property type="match status" value="1"/>
</dbReference>
<dbReference type="PANTHER" id="PTHR30004:SF5">
    <property type="entry name" value="4-HYDROXYTHREONINE-4-PHOSPHATE DEHYDROGENASE"/>
    <property type="match status" value="1"/>
</dbReference>
<dbReference type="Pfam" id="PF04166">
    <property type="entry name" value="PdxA"/>
    <property type="match status" value="1"/>
</dbReference>
<dbReference type="SUPFAM" id="SSF53659">
    <property type="entry name" value="Isocitrate/Isopropylmalate dehydrogenase-like"/>
    <property type="match status" value="1"/>
</dbReference>
<evidence type="ECO:0000255" key="1">
    <source>
        <dbReference type="HAMAP-Rule" id="MF_00536"/>
    </source>
</evidence>
<name>PDXA_WIGBR</name>